<organism>
    <name type="scientific">Lactococcus lactis subsp. cremoris (strain MG1363)</name>
    <dbReference type="NCBI Taxonomy" id="416870"/>
    <lineage>
        <taxon>Bacteria</taxon>
        <taxon>Bacillati</taxon>
        <taxon>Bacillota</taxon>
        <taxon>Bacilli</taxon>
        <taxon>Lactobacillales</taxon>
        <taxon>Streptococcaceae</taxon>
        <taxon>Lactococcus</taxon>
        <taxon>Lactococcus cremoris subsp. cremoris</taxon>
    </lineage>
</organism>
<proteinExistence type="inferred from homology"/>
<evidence type="ECO:0000255" key="1">
    <source>
        <dbReference type="HAMAP-Rule" id="MF_00418"/>
    </source>
</evidence>
<evidence type="ECO:0000305" key="2"/>
<accession>A2RJL6</accession>
<reference key="1">
    <citation type="journal article" date="2007" name="J. Bacteriol.">
        <title>The complete genome sequence of the lactic acid bacterial paradigm Lactococcus lactis subsp. cremoris MG1363.</title>
        <authorList>
            <person name="Wegmann U."/>
            <person name="O'Connell-Motherway M."/>
            <person name="Zomer A."/>
            <person name="Buist G."/>
            <person name="Shearman C."/>
            <person name="Canchaya C."/>
            <person name="Ventura M."/>
            <person name="Goesmann A."/>
            <person name="Gasson M.J."/>
            <person name="Kuipers O.P."/>
            <person name="van Sinderen D."/>
            <person name="Kok J."/>
        </authorList>
    </citation>
    <scope>NUCLEOTIDE SEQUENCE [LARGE SCALE GENOMIC DNA]</scope>
    <source>
        <strain>MG1363</strain>
    </source>
</reference>
<keyword id="KW-0028">Amino-acid biosynthesis</keyword>
<keyword id="KW-0963">Cytoplasm</keyword>
<keyword id="KW-0220">Diaminopimelate biosynthesis</keyword>
<keyword id="KW-0456">Lyase</keyword>
<keyword id="KW-0457">Lysine biosynthesis</keyword>
<keyword id="KW-0704">Schiff base</keyword>
<feature type="chain" id="PRO_1000050201" description="4-hydroxy-tetrahydrodipicolinate synthase">
    <location>
        <begin position="1"/>
        <end position="297"/>
    </location>
</feature>
<feature type="active site" description="Proton donor/acceptor" evidence="1">
    <location>
        <position position="144"/>
    </location>
</feature>
<feature type="active site" description="Schiff-base intermediate with substrate" evidence="1">
    <location>
        <position position="172"/>
    </location>
</feature>
<feature type="binding site" evidence="1">
    <location>
        <position position="55"/>
    </location>
    <ligand>
        <name>pyruvate</name>
        <dbReference type="ChEBI" id="CHEBI:15361"/>
    </ligand>
</feature>
<feature type="binding site" evidence="1">
    <location>
        <position position="213"/>
    </location>
    <ligand>
        <name>pyruvate</name>
        <dbReference type="ChEBI" id="CHEBI:15361"/>
    </ligand>
</feature>
<feature type="site" description="Part of a proton relay during catalysis" evidence="1">
    <location>
        <position position="54"/>
    </location>
</feature>
<feature type="site" description="Part of a proton relay during catalysis" evidence="1">
    <location>
        <position position="118"/>
    </location>
</feature>
<gene>
    <name evidence="1" type="primary">dapA</name>
    <name type="ordered locus">llmg_0874</name>
</gene>
<dbReference type="EC" id="4.3.3.7" evidence="1"/>
<dbReference type="EMBL" id="AM406671">
    <property type="protein sequence ID" value="CAL97469.1"/>
    <property type="molecule type" value="Genomic_DNA"/>
</dbReference>
<dbReference type="RefSeq" id="WP_011834836.1">
    <property type="nucleotide sequence ID" value="NC_009004.1"/>
</dbReference>
<dbReference type="SMR" id="A2RJL6"/>
<dbReference type="STRING" id="416870.llmg_0874"/>
<dbReference type="KEGG" id="llm:llmg_0874"/>
<dbReference type="eggNOG" id="COG0329">
    <property type="taxonomic scope" value="Bacteria"/>
</dbReference>
<dbReference type="HOGENOM" id="CLU_049343_7_1_9"/>
<dbReference type="OrthoDB" id="9782828at2"/>
<dbReference type="PhylomeDB" id="A2RJL6"/>
<dbReference type="UniPathway" id="UPA00034">
    <property type="reaction ID" value="UER00017"/>
</dbReference>
<dbReference type="Proteomes" id="UP000000364">
    <property type="component" value="Chromosome"/>
</dbReference>
<dbReference type="GO" id="GO:0005829">
    <property type="term" value="C:cytosol"/>
    <property type="evidence" value="ECO:0007669"/>
    <property type="project" value="TreeGrafter"/>
</dbReference>
<dbReference type="GO" id="GO:0008840">
    <property type="term" value="F:4-hydroxy-tetrahydrodipicolinate synthase activity"/>
    <property type="evidence" value="ECO:0007669"/>
    <property type="project" value="UniProtKB-UniRule"/>
</dbReference>
<dbReference type="GO" id="GO:0019877">
    <property type="term" value="P:diaminopimelate biosynthetic process"/>
    <property type="evidence" value="ECO:0007669"/>
    <property type="project" value="UniProtKB-UniRule"/>
</dbReference>
<dbReference type="GO" id="GO:0009089">
    <property type="term" value="P:lysine biosynthetic process via diaminopimelate"/>
    <property type="evidence" value="ECO:0007669"/>
    <property type="project" value="UniProtKB-UniRule"/>
</dbReference>
<dbReference type="CDD" id="cd00950">
    <property type="entry name" value="DHDPS"/>
    <property type="match status" value="1"/>
</dbReference>
<dbReference type="Gene3D" id="3.20.20.70">
    <property type="entry name" value="Aldolase class I"/>
    <property type="match status" value="1"/>
</dbReference>
<dbReference type="HAMAP" id="MF_00418">
    <property type="entry name" value="DapA"/>
    <property type="match status" value="1"/>
</dbReference>
<dbReference type="InterPro" id="IPR013785">
    <property type="entry name" value="Aldolase_TIM"/>
</dbReference>
<dbReference type="InterPro" id="IPR005263">
    <property type="entry name" value="DapA"/>
</dbReference>
<dbReference type="InterPro" id="IPR002220">
    <property type="entry name" value="DapA-like"/>
</dbReference>
<dbReference type="InterPro" id="IPR020625">
    <property type="entry name" value="Schiff_base-form_aldolases_AS"/>
</dbReference>
<dbReference type="NCBIfam" id="TIGR00674">
    <property type="entry name" value="dapA"/>
    <property type="match status" value="1"/>
</dbReference>
<dbReference type="PANTHER" id="PTHR12128:SF66">
    <property type="entry name" value="4-HYDROXY-2-OXOGLUTARATE ALDOLASE, MITOCHONDRIAL"/>
    <property type="match status" value="1"/>
</dbReference>
<dbReference type="PANTHER" id="PTHR12128">
    <property type="entry name" value="DIHYDRODIPICOLINATE SYNTHASE"/>
    <property type="match status" value="1"/>
</dbReference>
<dbReference type="Pfam" id="PF00701">
    <property type="entry name" value="DHDPS"/>
    <property type="match status" value="1"/>
</dbReference>
<dbReference type="PIRSF" id="PIRSF001365">
    <property type="entry name" value="DHDPS"/>
    <property type="match status" value="1"/>
</dbReference>
<dbReference type="PRINTS" id="PR00146">
    <property type="entry name" value="DHPICSNTHASE"/>
</dbReference>
<dbReference type="SMART" id="SM01130">
    <property type="entry name" value="DHDPS"/>
    <property type="match status" value="1"/>
</dbReference>
<dbReference type="SUPFAM" id="SSF51569">
    <property type="entry name" value="Aldolase"/>
    <property type="match status" value="1"/>
</dbReference>
<dbReference type="PROSITE" id="PS00666">
    <property type="entry name" value="DHDPS_2"/>
    <property type="match status" value="1"/>
</dbReference>
<name>DAPA_LACLM</name>
<protein>
    <recommendedName>
        <fullName evidence="1">4-hydroxy-tetrahydrodipicolinate synthase</fullName>
        <shortName evidence="1">HTPA synthase</shortName>
        <ecNumber evidence="1">4.3.3.7</ecNumber>
    </recommendedName>
</protein>
<comment type="function">
    <text evidence="1">Catalyzes the condensation of (S)-aspartate-beta-semialdehyde [(S)-ASA] and pyruvate to 4-hydroxy-tetrahydrodipicolinate (HTPA).</text>
</comment>
<comment type="catalytic activity">
    <reaction evidence="1">
        <text>L-aspartate 4-semialdehyde + pyruvate = (2S,4S)-4-hydroxy-2,3,4,5-tetrahydrodipicolinate + H2O + H(+)</text>
        <dbReference type="Rhea" id="RHEA:34171"/>
        <dbReference type="ChEBI" id="CHEBI:15361"/>
        <dbReference type="ChEBI" id="CHEBI:15377"/>
        <dbReference type="ChEBI" id="CHEBI:15378"/>
        <dbReference type="ChEBI" id="CHEBI:67139"/>
        <dbReference type="ChEBI" id="CHEBI:537519"/>
        <dbReference type="EC" id="4.3.3.7"/>
    </reaction>
</comment>
<comment type="pathway">
    <text evidence="1">Amino-acid biosynthesis; L-lysine biosynthesis via DAP pathway; (S)-tetrahydrodipicolinate from L-aspartate: step 3/4.</text>
</comment>
<comment type="subunit">
    <text evidence="1">Homotetramer; dimer of dimers.</text>
</comment>
<comment type="subcellular location">
    <subcellularLocation>
        <location evidence="1">Cytoplasm</location>
    </subcellularLocation>
</comment>
<comment type="similarity">
    <text evidence="1">Belongs to the DapA family.</text>
</comment>
<comment type="caution">
    <text evidence="2">Was originally thought to be a dihydrodipicolinate synthase (DHDPS), catalyzing the condensation of (S)-aspartate-beta-semialdehyde [(S)-ASA] and pyruvate to dihydrodipicolinate (DHDP). However, it was shown in E.coli that the product of the enzymatic reaction is not dihydrodipicolinate but in fact (4S)-4-hydroxy-2,3,4,5-tetrahydro-(2S)-dipicolinic acid (HTPA), and that the consecutive dehydration reaction leading to DHDP is not spontaneous but catalyzed by DapB.</text>
</comment>
<sequence>MSAKETIEKLKKARIITALVTPFKENGQINFEAFPKLVEDLLASHTEGLILAGTTAESPTLTHDEELEIFASINQLVDGRVPLIAGIGTNDTRDSVEFIKEVAKLGYIDAGLAVTPYYNKPSQEGIYQHFKAIATASDLPIILYNIPGRVVTEILPDTILRLAQLENVIAVKECTSTDNLAYLIENVPEDFLVYTGEDGLAFHAKTLGGQGVISVASHILGQEFFEMFAEIDQGSIQKAATIQRKILPKINALFSVTSPAPIKTVLNNKGYAVGGLRLPLVACTDQEAKIIIEQIEN</sequence>